<organism>
    <name type="scientific">Lysinibacillus sphaericus (strain C3-41)</name>
    <dbReference type="NCBI Taxonomy" id="444177"/>
    <lineage>
        <taxon>Bacteria</taxon>
        <taxon>Bacillati</taxon>
        <taxon>Bacillota</taxon>
        <taxon>Bacilli</taxon>
        <taxon>Bacillales</taxon>
        <taxon>Bacillaceae</taxon>
        <taxon>Lysinibacillus</taxon>
    </lineage>
</organism>
<reference key="1">
    <citation type="journal article" date="2008" name="J. Bacteriol.">
        <title>Complete genome sequence of the mosquitocidal bacterium Bacillus sphaericus C3-41 and comparison with those of closely related Bacillus species.</title>
        <authorList>
            <person name="Hu X."/>
            <person name="Fan W."/>
            <person name="Han B."/>
            <person name="Liu H."/>
            <person name="Zheng D."/>
            <person name="Li Q."/>
            <person name="Dong W."/>
            <person name="Yan J."/>
            <person name="Gao M."/>
            <person name="Berry C."/>
            <person name="Yuan Z."/>
        </authorList>
    </citation>
    <scope>NUCLEOTIDE SEQUENCE [LARGE SCALE GENOMIC DNA]</scope>
    <source>
        <strain>C3-41</strain>
    </source>
</reference>
<proteinExistence type="inferred from homology"/>
<evidence type="ECO:0000255" key="1">
    <source>
        <dbReference type="HAMAP-Rule" id="MF_00054"/>
    </source>
</evidence>
<name>EFG_LYSSC</name>
<sequence>MKREFSLENTRNIGIMAHIDAGKTTTTERILYYTGKIHKIGETHEGASQMDWMEQEQERGITITSAATTAQWAGHRVNIIDTPGHVDFTVEVERSLRVLDGAVTVLDAQSGVEPQTETVWRQATTYGVPRIVFINKMDKTGADFLYSVGTLHDRLQANAHPIQLPIGAEDQFSAIIDLVEMKATFYGDEKGTAVTEGEIPEEYRAQAEEYREKLIDAVASVDEDIMEKYLEGEEITVAELKAAIRRATIAVEFYPVICGTAFKHKGVRPMLNAVIDYLPSPVDVPAIKGTSVDGDEELERKSSDDEPFSALAFKVMTDPFVGKLTFFRVYSGTLDSGSYVQNSSKGKRERVGRILQMHANSREEISKVFAGDIAAAVGLKDTTTGDTLCDEKNLVILESMEFPEPVISLSVEPKSKADQDKMGQALQKLQEEDPTFRAHTDTETGQTIISGMGELHLDILVDRMRREFKVEANVGAPMVSYRETFRSSAKVQGKFTRQSGGRGQYGDVTIEFSPNEEGKGFEFENAIVGGVIPREYIPAVEAGLRDSLDRGVVAGYPLIDIKAKLVFGSYHDVDSNEMAFKIAASMALKEASKQCDAVILEPMMKVEVVIPEEYLGDIMGNITSRRGRVEGMDARGNSQVVRAMVPLAEMFGYATTLRSATQGRGVFSMTFDHYEEVPKSIAAEIIKKNKGE</sequence>
<keyword id="KW-0963">Cytoplasm</keyword>
<keyword id="KW-0251">Elongation factor</keyword>
<keyword id="KW-0342">GTP-binding</keyword>
<keyword id="KW-0547">Nucleotide-binding</keyword>
<keyword id="KW-0648">Protein biosynthesis</keyword>
<accession>B1HMZ1</accession>
<comment type="function">
    <text evidence="1">Catalyzes the GTP-dependent ribosomal translocation step during translation elongation. During this step, the ribosome changes from the pre-translocational (PRE) to the post-translocational (POST) state as the newly formed A-site-bound peptidyl-tRNA and P-site-bound deacylated tRNA move to the P and E sites, respectively. Catalyzes the coordinated movement of the two tRNA molecules, the mRNA and conformational changes in the ribosome.</text>
</comment>
<comment type="subcellular location">
    <subcellularLocation>
        <location evidence="1">Cytoplasm</location>
    </subcellularLocation>
</comment>
<comment type="similarity">
    <text evidence="1">Belongs to the TRAFAC class translation factor GTPase superfamily. Classic translation factor GTPase family. EF-G/EF-2 subfamily.</text>
</comment>
<gene>
    <name evidence="1" type="primary">fusA</name>
    <name type="ordered locus">Bsph_4625</name>
</gene>
<dbReference type="EMBL" id="CP000817">
    <property type="protein sequence ID" value="ACA42069.1"/>
    <property type="molecule type" value="Genomic_DNA"/>
</dbReference>
<dbReference type="RefSeq" id="WP_012296073.1">
    <property type="nucleotide sequence ID" value="NC_010382.1"/>
</dbReference>
<dbReference type="SMR" id="B1HMZ1"/>
<dbReference type="EnsemblBacteria" id="ACA42069">
    <property type="protein sequence ID" value="ACA42069"/>
    <property type="gene ID" value="Bsph_4625"/>
</dbReference>
<dbReference type="KEGG" id="lsp:Bsph_4625"/>
<dbReference type="HOGENOM" id="CLU_002794_4_1_9"/>
<dbReference type="Proteomes" id="UP000002164">
    <property type="component" value="Chromosome"/>
</dbReference>
<dbReference type="GO" id="GO:0005737">
    <property type="term" value="C:cytoplasm"/>
    <property type="evidence" value="ECO:0007669"/>
    <property type="project" value="UniProtKB-SubCell"/>
</dbReference>
<dbReference type="GO" id="GO:0005525">
    <property type="term" value="F:GTP binding"/>
    <property type="evidence" value="ECO:0007669"/>
    <property type="project" value="UniProtKB-UniRule"/>
</dbReference>
<dbReference type="GO" id="GO:0003924">
    <property type="term" value="F:GTPase activity"/>
    <property type="evidence" value="ECO:0007669"/>
    <property type="project" value="InterPro"/>
</dbReference>
<dbReference type="GO" id="GO:0003746">
    <property type="term" value="F:translation elongation factor activity"/>
    <property type="evidence" value="ECO:0007669"/>
    <property type="project" value="UniProtKB-UniRule"/>
</dbReference>
<dbReference type="GO" id="GO:0032790">
    <property type="term" value="P:ribosome disassembly"/>
    <property type="evidence" value="ECO:0007669"/>
    <property type="project" value="TreeGrafter"/>
</dbReference>
<dbReference type="CDD" id="cd01886">
    <property type="entry name" value="EF-G"/>
    <property type="match status" value="1"/>
</dbReference>
<dbReference type="CDD" id="cd16262">
    <property type="entry name" value="EFG_III"/>
    <property type="match status" value="1"/>
</dbReference>
<dbReference type="CDD" id="cd01434">
    <property type="entry name" value="EFG_mtEFG1_IV"/>
    <property type="match status" value="1"/>
</dbReference>
<dbReference type="CDD" id="cd03713">
    <property type="entry name" value="EFG_mtEFG_C"/>
    <property type="match status" value="1"/>
</dbReference>
<dbReference type="CDD" id="cd04088">
    <property type="entry name" value="EFG_mtEFG_II"/>
    <property type="match status" value="1"/>
</dbReference>
<dbReference type="FunFam" id="2.40.30.10:FF:000006">
    <property type="entry name" value="Elongation factor G"/>
    <property type="match status" value="1"/>
</dbReference>
<dbReference type="FunFam" id="3.30.230.10:FF:000003">
    <property type="entry name" value="Elongation factor G"/>
    <property type="match status" value="1"/>
</dbReference>
<dbReference type="FunFam" id="3.30.70.240:FF:000001">
    <property type="entry name" value="Elongation factor G"/>
    <property type="match status" value="1"/>
</dbReference>
<dbReference type="FunFam" id="3.30.70.870:FF:000001">
    <property type="entry name" value="Elongation factor G"/>
    <property type="match status" value="1"/>
</dbReference>
<dbReference type="FunFam" id="3.40.50.300:FF:000029">
    <property type="entry name" value="Elongation factor G"/>
    <property type="match status" value="1"/>
</dbReference>
<dbReference type="Gene3D" id="3.30.230.10">
    <property type="match status" value="1"/>
</dbReference>
<dbReference type="Gene3D" id="3.30.70.240">
    <property type="match status" value="1"/>
</dbReference>
<dbReference type="Gene3D" id="3.30.70.870">
    <property type="entry name" value="Elongation Factor G (Translational Gtpase), domain 3"/>
    <property type="match status" value="1"/>
</dbReference>
<dbReference type="Gene3D" id="3.40.50.300">
    <property type="entry name" value="P-loop containing nucleotide triphosphate hydrolases"/>
    <property type="match status" value="1"/>
</dbReference>
<dbReference type="Gene3D" id="2.40.30.10">
    <property type="entry name" value="Translation factors"/>
    <property type="match status" value="1"/>
</dbReference>
<dbReference type="HAMAP" id="MF_00054_B">
    <property type="entry name" value="EF_G_EF_2_B"/>
    <property type="match status" value="1"/>
</dbReference>
<dbReference type="InterPro" id="IPR041095">
    <property type="entry name" value="EFG_II"/>
</dbReference>
<dbReference type="InterPro" id="IPR009022">
    <property type="entry name" value="EFG_III"/>
</dbReference>
<dbReference type="InterPro" id="IPR035647">
    <property type="entry name" value="EFG_III/V"/>
</dbReference>
<dbReference type="InterPro" id="IPR047872">
    <property type="entry name" value="EFG_IV"/>
</dbReference>
<dbReference type="InterPro" id="IPR035649">
    <property type="entry name" value="EFG_V"/>
</dbReference>
<dbReference type="InterPro" id="IPR000640">
    <property type="entry name" value="EFG_V-like"/>
</dbReference>
<dbReference type="InterPro" id="IPR004161">
    <property type="entry name" value="EFTu-like_2"/>
</dbReference>
<dbReference type="InterPro" id="IPR031157">
    <property type="entry name" value="G_TR_CS"/>
</dbReference>
<dbReference type="InterPro" id="IPR027417">
    <property type="entry name" value="P-loop_NTPase"/>
</dbReference>
<dbReference type="InterPro" id="IPR020568">
    <property type="entry name" value="Ribosomal_Su5_D2-typ_SF"/>
</dbReference>
<dbReference type="InterPro" id="IPR014721">
    <property type="entry name" value="Ribsml_uS5_D2-typ_fold_subgr"/>
</dbReference>
<dbReference type="InterPro" id="IPR005225">
    <property type="entry name" value="Small_GTP-bd"/>
</dbReference>
<dbReference type="InterPro" id="IPR000795">
    <property type="entry name" value="T_Tr_GTP-bd_dom"/>
</dbReference>
<dbReference type="InterPro" id="IPR009000">
    <property type="entry name" value="Transl_B-barrel_sf"/>
</dbReference>
<dbReference type="InterPro" id="IPR004540">
    <property type="entry name" value="Transl_elong_EFG/EF2"/>
</dbReference>
<dbReference type="InterPro" id="IPR005517">
    <property type="entry name" value="Transl_elong_EFG/EF2_IV"/>
</dbReference>
<dbReference type="NCBIfam" id="TIGR00484">
    <property type="entry name" value="EF-G"/>
    <property type="match status" value="1"/>
</dbReference>
<dbReference type="NCBIfam" id="NF009379">
    <property type="entry name" value="PRK12740.1-3"/>
    <property type="match status" value="1"/>
</dbReference>
<dbReference type="NCBIfam" id="NF009381">
    <property type="entry name" value="PRK12740.1-5"/>
    <property type="match status" value="1"/>
</dbReference>
<dbReference type="NCBIfam" id="TIGR00231">
    <property type="entry name" value="small_GTP"/>
    <property type="match status" value="1"/>
</dbReference>
<dbReference type="PANTHER" id="PTHR43261:SF1">
    <property type="entry name" value="RIBOSOME-RELEASING FACTOR 2, MITOCHONDRIAL"/>
    <property type="match status" value="1"/>
</dbReference>
<dbReference type="PANTHER" id="PTHR43261">
    <property type="entry name" value="TRANSLATION ELONGATION FACTOR G-RELATED"/>
    <property type="match status" value="1"/>
</dbReference>
<dbReference type="Pfam" id="PF00679">
    <property type="entry name" value="EFG_C"/>
    <property type="match status" value="1"/>
</dbReference>
<dbReference type="Pfam" id="PF14492">
    <property type="entry name" value="EFG_III"/>
    <property type="match status" value="1"/>
</dbReference>
<dbReference type="Pfam" id="PF03764">
    <property type="entry name" value="EFG_IV"/>
    <property type="match status" value="1"/>
</dbReference>
<dbReference type="Pfam" id="PF00009">
    <property type="entry name" value="GTP_EFTU"/>
    <property type="match status" value="1"/>
</dbReference>
<dbReference type="Pfam" id="PF03144">
    <property type="entry name" value="GTP_EFTU_D2"/>
    <property type="match status" value="1"/>
</dbReference>
<dbReference type="PRINTS" id="PR00315">
    <property type="entry name" value="ELONGATNFCT"/>
</dbReference>
<dbReference type="SMART" id="SM00838">
    <property type="entry name" value="EFG_C"/>
    <property type="match status" value="1"/>
</dbReference>
<dbReference type="SMART" id="SM00889">
    <property type="entry name" value="EFG_IV"/>
    <property type="match status" value="1"/>
</dbReference>
<dbReference type="SUPFAM" id="SSF54980">
    <property type="entry name" value="EF-G C-terminal domain-like"/>
    <property type="match status" value="2"/>
</dbReference>
<dbReference type="SUPFAM" id="SSF52540">
    <property type="entry name" value="P-loop containing nucleoside triphosphate hydrolases"/>
    <property type="match status" value="1"/>
</dbReference>
<dbReference type="SUPFAM" id="SSF54211">
    <property type="entry name" value="Ribosomal protein S5 domain 2-like"/>
    <property type="match status" value="1"/>
</dbReference>
<dbReference type="SUPFAM" id="SSF50447">
    <property type="entry name" value="Translation proteins"/>
    <property type="match status" value="1"/>
</dbReference>
<dbReference type="PROSITE" id="PS00301">
    <property type="entry name" value="G_TR_1"/>
    <property type="match status" value="1"/>
</dbReference>
<dbReference type="PROSITE" id="PS51722">
    <property type="entry name" value="G_TR_2"/>
    <property type="match status" value="1"/>
</dbReference>
<protein>
    <recommendedName>
        <fullName evidence="1">Elongation factor G</fullName>
        <shortName evidence="1">EF-G</shortName>
    </recommendedName>
</protein>
<feature type="chain" id="PRO_1000091729" description="Elongation factor G">
    <location>
        <begin position="1"/>
        <end position="692"/>
    </location>
</feature>
<feature type="domain" description="tr-type G">
    <location>
        <begin position="8"/>
        <end position="282"/>
    </location>
</feature>
<feature type="binding site" evidence="1">
    <location>
        <begin position="17"/>
        <end position="24"/>
    </location>
    <ligand>
        <name>GTP</name>
        <dbReference type="ChEBI" id="CHEBI:37565"/>
    </ligand>
</feature>
<feature type="binding site" evidence="1">
    <location>
        <begin position="81"/>
        <end position="85"/>
    </location>
    <ligand>
        <name>GTP</name>
        <dbReference type="ChEBI" id="CHEBI:37565"/>
    </ligand>
</feature>
<feature type="binding site" evidence="1">
    <location>
        <begin position="135"/>
        <end position="138"/>
    </location>
    <ligand>
        <name>GTP</name>
        <dbReference type="ChEBI" id="CHEBI:37565"/>
    </ligand>
</feature>